<protein>
    <recommendedName>
        <fullName evidence="1">Ribosomal RNA large subunit methyltransferase E</fullName>
        <ecNumber evidence="1">2.1.1.166</ecNumber>
    </recommendedName>
    <alternativeName>
        <fullName evidence="1">23S rRNA Um2552 methyltransferase</fullName>
    </alternativeName>
    <alternativeName>
        <fullName evidence="1">rRNA (uridine-2'-O-)-methyltransferase</fullName>
    </alternativeName>
</protein>
<gene>
    <name evidence="1" type="primary">rlmE</name>
    <name evidence="1" type="synonym">ftsJ</name>
    <name evidence="1" type="synonym">rrmJ</name>
    <name type="ordered locus">SDY_3360</name>
</gene>
<accession>Q32BF4</accession>
<feature type="chain" id="PRO_0000282802" description="Ribosomal RNA large subunit methyltransferase E">
    <location>
        <begin position="1"/>
        <end position="209"/>
    </location>
</feature>
<feature type="active site" description="Proton acceptor" evidence="1">
    <location>
        <position position="164"/>
    </location>
</feature>
<feature type="binding site" evidence="1">
    <location>
        <position position="63"/>
    </location>
    <ligand>
        <name>S-adenosyl-L-methionine</name>
        <dbReference type="ChEBI" id="CHEBI:59789"/>
    </ligand>
</feature>
<feature type="binding site" evidence="1">
    <location>
        <position position="65"/>
    </location>
    <ligand>
        <name>S-adenosyl-L-methionine</name>
        <dbReference type="ChEBI" id="CHEBI:59789"/>
    </ligand>
</feature>
<feature type="binding site" evidence="1">
    <location>
        <position position="83"/>
    </location>
    <ligand>
        <name>S-adenosyl-L-methionine</name>
        <dbReference type="ChEBI" id="CHEBI:59789"/>
    </ligand>
</feature>
<feature type="binding site" evidence="1">
    <location>
        <position position="99"/>
    </location>
    <ligand>
        <name>S-adenosyl-L-methionine</name>
        <dbReference type="ChEBI" id="CHEBI:59789"/>
    </ligand>
</feature>
<feature type="binding site" evidence="1">
    <location>
        <position position="124"/>
    </location>
    <ligand>
        <name>S-adenosyl-L-methionine</name>
        <dbReference type="ChEBI" id="CHEBI:59789"/>
    </ligand>
</feature>
<comment type="function">
    <text evidence="1">Specifically methylates the uridine in position 2552 of 23S rRNA at the 2'-O position of the ribose in the fully assembled 50S ribosomal subunit.</text>
</comment>
<comment type="catalytic activity">
    <reaction evidence="1">
        <text>uridine(2552) in 23S rRNA + S-adenosyl-L-methionine = 2'-O-methyluridine(2552) in 23S rRNA + S-adenosyl-L-homocysteine + H(+)</text>
        <dbReference type="Rhea" id="RHEA:42720"/>
        <dbReference type="Rhea" id="RHEA-COMP:10202"/>
        <dbReference type="Rhea" id="RHEA-COMP:10203"/>
        <dbReference type="ChEBI" id="CHEBI:15378"/>
        <dbReference type="ChEBI" id="CHEBI:57856"/>
        <dbReference type="ChEBI" id="CHEBI:59789"/>
        <dbReference type="ChEBI" id="CHEBI:65315"/>
        <dbReference type="ChEBI" id="CHEBI:74478"/>
        <dbReference type="EC" id="2.1.1.166"/>
    </reaction>
</comment>
<comment type="subcellular location">
    <subcellularLocation>
        <location evidence="1">Cytoplasm</location>
    </subcellularLocation>
</comment>
<comment type="similarity">
    <text evidence="1">Belongs to the class I-like SAM-binding methyltransferase superfamily. RNA methyltransferase RlmE family.</text>
</comment>
<dbReference type="EC" id="2.1.1.166" evidence="1"/>
<dbReference type="EMBL" id="CP000034">
    <property type="protein sequence ID" value="ABB63351.1"/>
    <property type="molecule type" value="Genomic_DNA"/>
</dbReference>
<dbReference type="RefSeq" id="WP_000145972.1">
    <property type="nucleotide sequence ID" value="NC_007606.1"/>
</dbReference>
<dbReference type="RefSeq" id="YP_404842.1">
    <property type="nucleotide sequence ID" value="NC_007606.1"/>
</dbReference>
<dbReference type="SMR" id="Q32BF4"/>
<dbReference type="STRING" id="300267.SDY_3360"/>
<dbReference type="EnsemblBacteria" id="ABB63351">
    <property type="protein sequence ID" value="ABB63351"/>
    <property type="gene ID" value="SDY_3360"/>
</dbReference>
<dbReference type="KEGG" id="sdy:SDY_3360"/>
<dbReference type="PATRIC" id="fig|300267.13.peg.4014"/>
<dbReference type="HOGENOM" id="CLU_009422_4_0_6"/>
<dbReference type="Proteomes" id="UP000002716">
    <property type="component" value="Chromosome"/>
</dbReference>
<dbReference type="GO" id="GO:0005737">
    <property type="term" value="C:cytoplasm"/>
    <property type="evidence" value="ECO:0007669"/>
    <property type="project" value="UniProtKB-SubCell"/>
</dbReference>
<dbReference type="GO" id="GO:0008650">
    <property type="term" value="F:rRNA (uridine-2'-O-)-methyltransferase activity"/>
    <property type="evidence" value="ECO:0007669"/>
    <property type="project" value="UniProtKB-UniRule"/>
</dbReference>
<dbReference type="FunFam" id="3.40.50.150:FF:000005">
    <property type="entry name" value="Ribosomal RNA large subunit methyltransferase E"/>
    <property type="match status" value="1"/>
</dbReference>
<dbReference type="Gene3D" id="3.40.50.150">
    <property type="entry name" value="Vaccinia Virus protein VP39"/>
    <property type="match status" value="1"/>
</dbReference>
<dbReference type="HAMAP" id="MF_01547">
    <property type="entry name" value="RNA_methyltr_E"/>
    <property type="match status" value="1"/>
</dbReference>
<dbReference type="InterPro" id="IPR050082">
    <property type="entry name" value="RNA_methyltr_RlmE"/>
</dbReference>
<dbReference type="InterPro" id="IPR002877">
    <property type="entry name" value="RNA_MeTrfase_FtsJ_dom"/>
</dbReference>
<dbReference type="InterPro" id="IPR015507">
    <property type="entry name" value="rRNA-MeTfrase_E"/>
</dbReference>
<dbReference type="InterPro" id="IPR004512">
    <property type="entry name" value="rRNA_MeTrfase_gammaproteobac"/>
</dbReference>
<dbReference type="InterPro" id="IPR029063">
    <property type="entry name" value="SAM-dependent_MTases_sf"/>
</dbReference>
<dbReference type="NCBIfam" id="NF008390">
    <property type="entry name" value="PRK11188.1"/>
    <property type="match status" value="1"/>
</dbReference>
<dbReference type="NCBIfam" id="TIGR00438">
    <property type="entry name" value="rrmJ"/>
    <property type="match status" value="1"/>
</dbReference>
<dbReference type="PANTHER" id="PTHR10920">
    <property type="entry name" value="RIBOSOMAL RNA METHYLTRANSFERASE"/>
    <property type="match status" value="1"/>
</dbReference>
<dbReference type="PANTHER" id="PTHR10920:SF18">
    <property type="entry name" value="RRNA METHYLTRANSFERASE 2, MITOCHONDRIAL"/>
    <property type="match status" value="1"/>
</dbReference>
<dbReference type="Pfam" id="PF01728">
    <property type="entry name" value="FtsJ"/>
    <property type="match status" value="1"/>
</dbReference>
<dbReference type="PIRSF" id="PIRSF005461">
    <property type="entry name" value="23S_rRNA_mtase"/>
    <property type="match status" value="1"/>
</dbReference>
<dbReference type="SUPFAM" id="SSF53335">
    <property type="entry name" value="S-adenosyl-L-methionine-dependent methyltransferases"/>
    <property type="match status" value="1"/>
</dbReference>
<evidence type="ECO:0000255" key="1">
    <source>
        <dbReference type="HAMAP-Rule" id="MF_01547"/>
    </source>
</evidence>
<organism>
    <name type="scientific">Shigella dysenteriae serotype 1 (strain Sd197)</name>
    <dbReference type="NCBI Taxonomy" id="300267"/>
    <lineage>
        <taxon>Bacteria</taxon>
        <taxon>Pseudomonadati</taxon>
        <taxon>Pseudomonadota</taxon>
        <taxon>Gammaproteobacteria</taxon>
        <taxon>Enterobacterales</taxon>
        <taxon>Enterobacteriaceae</taxon>
        <taxon>Shigella</taxon>
    </lineage>
</organism>
<sequence length="209" mass="23351">MTGKKRSASSSRWLQEHFSDKYVQQAQKKGLRSRAWFKLDEIQQSDKLFKPGMTVVDLGAAPGGWSQYVVTQIGGKGRIIACDLLPMDPIVGVDFLQGDFRDELVMKALLERVGDSKVQVVMSDMAPNMSGTPAVDIPRAMYLVELALEMCRDVLALGGSFVVKVFQGEGFDEYLREIRSLFTKVKVRKPDSSRARSREVYIVATGRKP</sequence>
<name>RLME_SHIDS</name>
<proteinExistence type="inferred from homology"/>
<reference key="1">
    <citation type="journal article" date="2005" name="Nucleic Acids Res.">
        <title>Genome dynamics and diversity of Shigella species, the etiologic agents of bacillary dysentery.</title>
        <authorList>
            <person name="Yang F."/>
            <person name="Yang J."/>
            <person name="Zhang X."/>
            <person name="Chen L."/>
            <person name="Jiang Y."/>
            <person name="Yan Y."/>
            <person name="Tang X."/>
            <person name="Wang J."/>
            <person name="Xiong Z."/>
            <person name="Dong J."/>
            <person name="Xue Y."/>
            <person name="Zhu Y."/>
            <person name="Xu X."/>
            <person name="Sun L."/>
            <person name="Chen S."/>
            <person name="Nie H."/>
            <person name="Peng J."/>
            <person name="Xu J."/>
            <person name="Wang Y."/>
            <person name="Yuan Z."/>
            <person name="Wen Y."/>
            <person name="Yao Z."/>
            <person name="Shen Y."/>
            <person name="Qiang B."/>
            <person name="Hou Y."/>
            <person name="Yu J."/>
            <person name="Jin Q."/>
        </authorList>
    </citation>
    <scope>NUCLEOTIDE SEQUENCE [LARGE SCALE GENOMIC DNA]</scope>
    <source>
        <strain>Sd197</strain>
    </source>
</reference>
<keyword id="KW-0963">Cytoplasm</keyword>
<keyword id="KW-0489">Methyltransferase</keyword>
<keyword id="KW-1185">Reference proteome</keyword>
<keyword id="KW-0698">rRNA processing</keyword>
<keyword id="KW-0949">S-adenosyl-L-methionine</keyword>
<keyword id="KW-0808">Transferase</keyword>